<protein>
    <recommendedName>
        <fullName evidence="1">tRNA N6-adenosine threonylcarbamoyltransferase</fullName>
        <ecNumber evidence="1">2.3.1.234</ecNumber>
    </recommendedName>
    <alternativeName>
        <fullName evidence="1">N6-L-threonylcarbamoyladenine synthase</fullName>
        <shortName evidence="1">t(6)A synthase</shortName>
    </alternativeName>
    <alternativeName>
        <fullName evidence="1">t(6)A37 threonylcarbamoyladenosine biosynthesis protein TsaD</fullName>
    </alternativeName>
    <alternativeName>
        <fullName evidence="1">tRNA threonylcarbamoyladenosine biosynthesis protein TsaD</fullName>
    </alternativeName>
</protein>
<reference key="1">
    <citation type="journal article" date="2004" name="Nucleic Acids Res.">
        <title>Thermoadaptation trait revealed by the genome sequence of thermophilic Geobacillus kaustophilus.</title>
        <authorList>
            <person name="Takami H."/>
            <person name="Takaki Y."/>
            <person name="Chee G.-J."/>
            <person name="Nishi S."/>
            <person name="Shimamura S."/>
            <person name="Suzuki H."/>
            <person name="Matsui S."/>
            <person name="Uchiyama I."/>
        </authorList>
    </citation>
    <scope>NUCLEOTIDE SEQUENCE [LARGE SCALE GENOMIC DNA]</scope>
    <source>
        <strain>HTA426</strain>
    </source>
</reference>
<name>TSAD_GEOKA</name>
<comment type="function">
    <text evidence="1">Required for the formation of a threonylcarbamoyl group on adenosine at position 37 (t(6)A37) in tRNAs that read codons beginning with adenine. Is involved in the transfer of the threonylcarbamoyl moiety of threonylcarbamoyl-AMP (TC-AMP) to the N6 group of A37, together with TsaE and TsaB. TsaD likely plays a direct catalytic role in this reaction.</text>
</comment>
<comment type="catalytic activity">
    <reaction evidence="1">
        <text>L-threonylcarbamoyladenylate + adenosine(37) in tRNA = N(6)-L-threonylcarbamoyladenosine(37) in tRNA + AMP + H(+)</text>
        <dbReference type="Rhea" id="RHEA:37059"/>
        <dbReference type="Rhea" id="RHEA-COMP:10162"/>
        <dbReference type="Rhea" id="RHEA-COMP:10163"/>
        <dbReference type="ChEBI" id="CHEBI:15378"/>
        <dbReference type="ChEBI" id="CHEBI:73682"/>
        <dbReference type="ChEBI" id="CHEBI:74411"/>
        <dbReference type="ChEBI" id="CHEBI:74418"/>
        <dbReference type="ChEBI" id="CHEBI:456215"/>
        <dbReference type="EC" id="2.3.1.234"/>
    </reaction>
</comment>
<comment type="cofactor">
    <cofactor evidence="1">
        <name>Fe(2+)</name>
        <dbReference type="ChEBI" id="CHEBI:29033"/>
    </cofactor>
    <text evidence="1">Binds 1 Fe(2+) ion per subunit.</text>
</comment>
<comment type="subcellular location">
    <subcellularLocation>
        <location evidence="1">Cytoplasm</location>
    </subcellularLocation>
</comment>
<comment type="similarity">
    <text evidence="1">Belongs to the KAE1 / TsaD family.</text>
</comment>
<sequence>MGEAEMNEDVYVLGIETSCDETAAAVVKNGREVLSNVVASQMESHRRFGGVVPEIASRHHVEQITLVIEEAMQQAGVSFASLDAVAVTAGPGLVGALLVGVNAAKALAFAHGLPLIGVHHIAGHIYANQLVAEMKFPLLALVVSGGHTELVFMKEHGNFAVIGETRDDAAGEAYDKVARALGLPYPGGPHIDRLAHEGEPVIDLPRAWLEEGSYDFSFSGLKSAVLNALHNAKQRGEEIDPRQMAASFQASVVDVLVTKTVQAAKEYRVRQVLLAGGVAANRGLRAALQDKMKELPDVELVIPPLSLCTDNAAMIAVAGTVLYQQGKRADLALNANPSLPLV</sequence>
<evidence type="ECO:0000255" key="1">
    <source>
        <dbReference type="HAMAP-Rule" id="MF_01445"/>
    </source>
</evidence>
<organism>
    <name type="scientific">Geobacillus kaustophilus (strain HTA426)</name>
    <dbReference type="NCBI Taxonomy" id="235909"/>
    <lineage>
        <taxon>Bacteria</taxon>
        <taxon>Bacillati</taxon>
        <taxon>Bacillota</taxon>
        <taxon>Bacilli</taxon>
        <taxon>Bacillales</taxon>
        <taxon>Anoxybacillaceae</taxon>
        <taxon>Geobacillus</taxon>
        <taxon>Geobacillus thermoleovorans group</taxon>
    </lineage>
</organism>
<accession>Q5L3F6</accession>
<gene>
    <name evidence="1" type="primary">tsaD</name>
    <name type="synonym">gcp</name>
    <name type="ordered locus">GK0239</name>
</gene>
<proteinExistence type="inferred from homology"/>
<feature type="chain" id="PRO_0000303372" description="tRNA N6-adenosine threonylcarbamoyltransferase">
    <location>
        <begin position="1"/>
        <end position="342"/>
    </location>
</feature>
<feature type="binding site" evidence="1">
    <location>
        <position position="120"/>
    </location>
    <ligand>
        <name>Fe cation</name>
        <dbReference type="ChEBI" id="CHEBI:24875"/>
    </ligand>
</feature>
<feature type="binding site" evidence="1">
    <location>
        <position position="124"/>
    </location>
    <ligand>
        <name>Fe cation</name>
        <dbReference type="ChEBI" id="CHEBI:24875"/>
    </ligand>
</feature>
<feature type="binding site" evidence="1">
    <location>
        <begin position="142"/>
        <end position="146"/>
    </location>
    <ligand>
        <name>substrate</name>
    </ligand>
</feature>
<feature type="binding site" evidence="1">
    <location>
        <position position="175"/>
    </location>
    <ligand>
        <name>substrate</name>
    </ligand>
</feature>
<feature type="binding site" evidence="1">
    <location>
        <position position="188"/>
    </location>
    <ligand>
        <name>substrate</name>
    </ligand>
</feature>
<feature type="binding site" evidence="1">
    <location>
        <position position="192"/>
    </location>
    <ligand>
        <name>substrate</name>
    </ligand>
</feature>
<feature type="binding site" evidence="1">
    <location>
        <position position="281"/>
    </location>
    <ligand>
        <name>substrate</name>
    </ligand>
</feature>
<feature type="binding site" evidence="1">
    <location>
        <position position="310"/>
    </location>
    <ligand>
        <name>Fe cation</name>
        <dbReference type="ChEBI" id="CHEBI:24875"/>
    </ligand>
</feature>
<keyword id="KW-0012">Acyltransferase</keyword>
<keyword id="KW-0963">Cytoplasm</keyword>
<keyword id="KW-0408">Iron</keyword>
<keyword id="KW-0479">Metal-binding</keyword>
<keyword id="KW-1185">Reference proteome</keyword>
<keyword id="KW-0808">Transferase</keyword>
<keyword id="KW-0819">tRNA processing</keyword>
<dbReference type="EC" id="2.3.1.234" evidence="1"/>
<dbReference type="EMBL" id="BA000043">
    <property type="protein sequence ID" value="BAD74524.1"/>
    <property type="molecule type" value="Genomic_DNA"/>
</dbReference>
<dbReference type="SMR" id="Q5L3F6"/>
<dbReference type="STRING" id="235909.GK0239"/>
<dbReference type="KEGG" id="gka:GK0239"/>
<dbReference type="eggNOG" id="COG0533">
    <property type="taxonomic scope" value="Bacteria"/>
</dbReference>
<dbReference type="HOGENOM" id="CLU_023208_0_2_9"/>
<dbReference type="Proteomes" id="UP000001172">
    <property type="component" value="Chromosome"/>
</dbReference>
<dbReference type="GO" id="GO:0005737">
    <property type="term" value="C:cytoplasm"/>
    <property type="evidence" value="ECO:0007669"/>
    <property type="project" value="UniProtKB-SubCell"/>
</dbReference>
<dbReference type="GO" id="GO:0005506">
    <property type="term" value="F:iron ion binding"/>
    <property type="evidence" value="ECO:0007669"/>
    <property type="project" value="UniProtKB-UniRule"/>
</dbReference>
<dbReference type="GO" id="GO:0061711">
    <property type="term" value="F:N(6)-L-threonylcarbamoyladenine synthase activity"/>
    <property type="evidence" value="ECO:0007669"/>
    <property type="project" value="UniProtKB-EC"/>
</dbReference>
<dbReference type="GO" id="GO:0002949">
    <property type="term" value="P:tRNA threonylcarbamoyladenosine modification"/>
    <property type="evidence" value="ECO:0007669"/>
    <property type="project" value="UniProtKB-UniRule"/>
</dbReference>
<dbReference type="CDD" id="cd24133">
    <property type="entry name" value="ASKHA_NBD_TsaD_bac"/>
    <property type="match status" value="1"/>
</dbReference>
<dbReference type="FunFam" id="3.30.420.40:FF:000012">
    <property type="entry name" value="tRNA N6-adenosine threonylcarbamoyltransferase"/>
    <property type="match status" value="1"/>
</dbReference>
<dbReference type="FunFam" id="3.30.420.40:FF:000040">
    <property type="entry name" value="tRNA N6-adenosine threonylcarbamoyltransferase"/>
    <property type="match status" value="1"/>
</dbReference>
<dbReference type="Gene3D" id="3.30.420.40">
    <property type="match status" value="2"/>
</dbReference>
<dbReference type="HAMAP" id="MF_01445">
    <property type="entry name" value="TsaD"/>
    <property type="match status" value="1"/>
</dbReference>
<dbReference type="InterPro" id="IPR043129">
    <property type="entry name" value="ATPase_NBD"/>
</dbReference>
<dbReference type="InterPro" id="IPR000905">
    <property type="entry name" value="Gcp-like_dom"/>
</dbReference>
<dbReference type="InterPro" id="IPR017861">
    <property type="entry name" value="KAE1/TsaD"/>
</dbReference>
<dbReference type="InterPro" id="IPR017860">
    <property type="entry name" value="Peptidase_M22_CS"/>
</dbReference>
<dbReference type="InterPro" id="IPR022450">
    <property type="entry name" value="TsaD"/>
</dbReference>
<dbReference type="NCBIfam" id="TIGR00329">
    <property type="entry name" value="gcp_kae1"/>
    <property type="match status" value="1"/>
</dbReference>
<dbReference type="NCBIfam" id="TIGR03723">
    <property type="entry name" value="T6A_TsaD_YgjD"/>
    <property type="match status" value="1"/>
</dbReference>
<dbReference type="PANTHER" id="PTHR11735">
    <property type="entry name" value="TRNA N6-ADENOSINE THREONYLCARBAMOYLTRANSFERASE"/>
    <property type="match status" value="1"/>
</dbReference>
<dbReference type="PANTHER" id="PTHR11735:SF6">
    <property type="entry name" value="TRNA N6-ADENOSINE THREONYLCARBAMOYLTRANSFERASE, MITOCHONDRIAL"/>
    <property type="match status" value="1"/>
</dbReference>
<dbReference type="Pfam" id="PF00814">
    <property type="entry name" value="TsaD"/>
    <property type="match status" value="1"/>
</dbReference>
<dbReference type="PRINTS" id="PR00789">
    <property type="entry name" value="OSIALOPTASE"/>
</dbReference>
<dbReference type="SUPFAM" id="SSF53067">
    <property type="entry name" value="Actin-like ATPase domain"/>
    <property type="match status" value="2"/>
</dbReference>
<dbReference type="PROSITE" id="PS01016">
    <property type="entry name" value="GLYCOPROTEASE"/>
    <property type="match status" value="1"/>
</dbReference>